<gene>
    <name evidence="1" type="primary">hisB</name>
    <name type="ordered locus">Arth_1471</name>
</gene>
<dbReference type="EC" id="4.2.1.19" evidence="1"/>
<dbReference type="EMBL" id="CP000454">
    <property type="protein sequence ID" value="ABK02865.1"/>
    <property type="molecule type" value="Genomic_DNA"/>
</dbReference>
<dbReference type="RefSeq" id="WP_011691332.1">
    <property type="nucleotide sequence ID" value="NC_008541.1"/>
</dbReference>
<dbReference type="SMR" id="A0JUZ5"/>
<dbReference type="STRING" id="290399.Arth_1471"/>
<dbReference type="KEGG" id="art:Arth_1471"/>
<dbReference type="eggNOG" id="COG0131">
    <property type="taxonomic scope" value="Bacteria"/>
</dbReference>
<dbReference type="HOGENOM" id="CLU_044308_2_0_11"/>
<dbReference type="OrthoDB" id="9790411at2"/>
<dbReference type="UniPathway" id="UPA00031">
    <property type="reaction ID" value="UER00011"/>
</dbReference>
<dbReference type="Proteomes" id="UP000000754">
    <property type="component" value="Chromosome"/>
</dbReference>
<dbReference type="GO" id="GO:0005737">
    <property type="term" value="C:cytoplasm"/>
    <property type="evidence" value="ECO:0007669"/>
    <property type="project" value="UniProtKB-SubCell"/>
</dbReference>
<dbReference type="GO" id="GO:0004424">
    <property type="term" value="F:imidazoleglycerol-phosphate dehydratase activity"/>
    <property type="evidence" value="ECO:0007669"/>
    <property type="project" value="UniProtKB-UniRule"/>
</dbReference>
<dbReference type="GO" id="GO:0000105">
    <property type="term" value="P:L-histidine biosynthetic process"/>
    <property type="evidence" value="ECO:0007669"/>
    <property type="project" value="UniProtKB-UniRule"/>
</dbReference>
<dbReference type="CDD" id="cd07914">
    <property type="entry name" value="IGPD"/>
    <property type="match status" value="1"/>
</dbReference>
<dbReference type="FunFam" id="3.30.230.40:FF:000001">
    <property type="entry name" value="Imidazoleglycerol-phosphate dehydratase HisB"/>
    <property type="match status" value="1"/>
</dbReference>
<dbReference type="FunFam" id="3.30.230.40:FF:000003">
    <property type="entry name" value="Imidazoleglycerol-phosphate dehydratase HisB"/>
    <property type="match status" value="1"/>
</dbReference>
<dbReference type="Gene3D" id="3.30.230.40">
    <property type="entry name" value="Imidazole glycerol phosphate dehydratase, domain 1"/>
    <property type="match status" value="2"/>
</dbReference>
<dbReference type="HAMAP" id="MF_00076">
    <property type="entry name" value="HisB"/>
    <property type="match status" value="1"/>
</dbReference>
<dbReference type="InterPro" id="IPR038494">
    <property type="entry name" value="IGPD_sf"/>
</dbReference>
<dbReference type="InterPro" id="IPR000807">
    <property type="entry name" value="ImidazoleglycerolP_deHydtase"/>
</dbReference>
<dbReference type="InterPro" id="IPR020565">
    <property type="entry name" value="ImidazoleglycerP_deHydtase_CS"/>
</dbReference>
<dbReference type="InterPro" id="IPR020568">
    <property type="entry name" value="Ribosomal_Su5_D2-typ_SF"/>
</dbReference>
<dbReference type="NCBIfam" id="NF002110">
    <property type="entry name" value="PRK00951.1-6"/>
    <property type="match status" value="1"/>
</dbReference>
<dbReference type="NCBIfam" id="NF002111">
    <property type="entry name" value="PRK00951.2-1"/>
    <property type="match status" value="1"/>
</dbReference>
<dbReference type="NCBIfam" id="NF002114">
    <property type="entry name" value="PRK00951.2-4"/>
    <property type="match status" value="1"/>
</dbReference>
<dbReference type="PANTHER" id="PTHR23133:SF2">
    <property type="entry name" value="IMIDAZOLEGLYCEROL-PHOSPHATE DEHYDRATASE"/>
    <property type="match status" value="1"/>
</dbReference>
<dbReference type="PANTHER" id="PTHR23133">
    <property type="entry name" value="IMIDAZOLEGLYCEROL-PHOSPHATE DEHYDRATASE HIS7"/>
    <property type="match status" value="1"/>
</dbReference>
<dbReference type="Pfam" id="PF00475">
    <property type="entry name" value="IGPD"/>
    <property type="match status" value="1"/>
</dbReference>
<dbReference type="SUPFAM" id="SSF54211">
    <property type="entry name" value="Ribosomal protein S5 domain 2-like"/>
    <property type="match status" value="2"/>
</dbReference>
<dbReference type="PROSITE" id="PS00954">
    <property type="entry name" value="IGP_DEHYDRATASE_1"/>
    <property type="match status" value="1"/>
</dbReference>
<dbReference type="PROSITE" id="PS00955">
    <property type="entry name" value="IGP_DEHYDRATASE_2"/>
    <property type="match status" value="1"/>
</dbReference>
<keyword id="KW-0028">Amino-acid biosynthesis</keyword>
<keyword id="KW-0963">Cytoplasm</keyword>
<keyword id="KW-0368">Histidine biosynthesis</keyword>
<keyword id="KW-0456">Lyase</keyword>
<keyword id="KW-1185">Reference proteome</keyword>
<organism>
    <name type="scientific">Arthrobacter sp. (strain FB24)</name>
    <dbReference type="NCBI Taxonomy" id="290399"/>
    <lineage>
        <taxon>Bacteria</taxon>
        <taxon>Bacillati</taxon>
        <taxon>Actinomycetota</taxon>
        <taxon>Actinomycetes</taxon>
        <taxon>Micrococcales</taxon>
        <taxon>Micrococcaceae</taxon>
        <taxon>Arthrobacter</taxon>
    </lineage>
</organism>
<evidence type="ECO:0000255" key="1">
    <source>
        <dbReference type="HAMAP-Rule" id="MF_00076"/>
    </source>
</evidence>
<proteinExistence type="inferred from homology"/>
<comment type="catalytic activity">
    <reaction evidence="1">
        <text>D-erythro-1-(imidazol-4-yl)glycerol 3-phosphate = 3-(imidazol-4-yl)-2-oxopropyl phosphate + H2O</text>
        <dbReference type="Rhea" id="RHEA:11040"/>
        <dbReference type="ChEBI" id="CHEBI:15377"/>
        <dbReference type="ChEBI" id="CHEBI:57766"/>
        <dbReference type="ChEBI" id="CHEBI:58278"/>
        <dbReference type="EC" id="4.2.1.19"/>
    </reaction>
</comment>
<comment type="pathway">
    <text evidence="1">Amino-acid biosynthesis; L-histidine biosynthesis; L-histidine from 5-phospho-alpha-D-ribose 1-diphosphate: step 6/9.</text>
</comment>
<comment type="subcellular location">
    <subcellularLocation>
        <location evidence="1">Cytoplasm</location>
    </subcellularLocation>
</comment>
<comment type="similarity">
    <text evidence="1">Belongs to the imidazoleglycerol-phosphate dehydratase family.</text>
</comment>
<name>HIS7_ARTS2</name>
<accession>A0JUZ5</accession>
<reference key="1">
    <citation type="journal article" date="2013" name="Stand. Genomic Sci.">
        <title>Complete genome sequence of Arthrobacter sp. strain FB24.</title>
        <authorList>
            <person name="Nakatsu C.H."/>
            <person name="Barabote R."/>
            <person name="Thompson S."/>
            <person name="Bruce D."/>
            <person name="Detter C."/>
            <person name="Brettin T."/>
            <person name="Han C."/>
            <person name="Beasley F."/>
            <person name="Chen W."/>
            <person name="Konopka A."/>
            <person name="Xie G."/>
        </authorList>
    </citation>
    <scope>NUCLEOTIDE SEQUENCE [LARGE SCALE GENOMIC DNA]</scope>
    <source>
        <strain>FB24</strain>
    </source>
</reference>
<feature type="chain" id="PRO_0000336294" description="Imidazoleglycerol-phosphate dehydratase">
    <location>
        <begin position="1"/>
        <end position="208"/>
    </location>
</feature>
<protein>
    <recommendedName>
        <fullName evidence="1">Imidazoleglycerol-phosphate dehydratase</fullName>
        <shortName evidence="1">IGPD</shortName>
        <ecNumber evidence="1">4.2.1.19</ecNumber>
    </recommendedName>
</protein>
<sequence length="208" mass="22200">MSTNGSIAAEARTARMERSTSESSVLVEINLDGTGVSDISTSVPFYDHMLTALSKHSLIDMTVKATGDIHIDVHHTVEDVAITFGEVLRTALGNKAGIRRFGEATVPLDEALAHAVVDVSGRPYLVHGGEPAGQEYHLIGGHFTGSLTRHVFEAITLHAGICLHMNVIAGRDPHHIVEAQFKAFARALRAAVEPDPRVEGIPSTKGAL</sequence>